<protein>
    <recommendedName>
        <fullName evidence="1">Small ribosomal subunit protein uS8</fullName>
    </recommendedName>
    <alternativeName>
        <fullName evidence="2">30S ribosomal protein S8</fullName>
    </alternativeName>
</protein>
<name>RS8_MYCAP</name>
<sequence>MFITDPISDMIVRIKNANQRKFKTVLIPYSNKKAKILEILLNEGYISSFVTKGEGKDKTLEVALKYKGNQSAIIDFKRISKPGLRVYAAANNLSSVLSGYGTVIISTSKGVMTEKQARKENVGGEVLAYIW</sequence>
<evidence type="ECO:0000255" key="1">
    <source>
        <dbReference type="HAMAP-Rule" id="MF_01302"/>
    </source>
</evidence>
<evidence type="ECO:0000305" key="2"/>
<accession>A5IYX2</accession>
<organism>
    <name type="scientific">Mycoplasmopsis agalactiae (strain NCTC 10123 / CIP 59.7 / PG2)</name>
    <name type="common">Mycoplasma agalactiae</name>
    <dbReference type="NCBI Taxonomy" id="347257"/>
    <lineage>
        <taxon>Bacteria</taxon>
        <taxon>Bacillati</taxon>
        <taxon>Mycoplasmatota</taxon>
        <taxon>Mycoplasmoidales</taxon>
        <taxon>Metamycoplasmataceae</taxon>
        <taxon>Mycoplasmopsis</taxon>
    </lineage>
</organism>
<reference key="1">
    <citation type="journal article" date="2007" name="PLoS Genet.">
        <title>Being pathogenic, plastic, and sexual while living with a nearly minimal bacterial genome.</title>
        <authorList>
            <person name="Sirand-Pugnet P."/>
            <person name="Lartigue C."/>
            <person name="Marenda M."/>
            <person name="Jacob D."/>
            <person name="Barre A."/>
            <person name="Barbe V."/>
            <person name="Schenowitz C."/>
            <person name="Mangenot S."/>
            <person name="Couloux A."/>
            <person name="Segurens B."/>
            <person name="de Daruvar A."/>
            <person name="Blanchard A."/>
            <person name="Citti C."/>
        </authorList>
    </citation>
    <scope>NUCLEOTIDE SEQUENCE [LARGE SCALE GENOMIC DNA]</scope>
    <source>
        <strain>NCTC 10123 / CIP 59.7 / PG2</strain>
    </source>
</reference>
<gene>
    <name evidence="1" type="primary">rpsH</name>
    <name type="ordered locus">MAG5330</name>
</gene>
<feature type="chain" id="PRO_1000140582" description="Small ribosomal subunit protein uS8">
    <location>
        <begin position="1"/>
        <end position="131"/>
    </location>
</feature>
<comment type="function">
    <text evidence="1">One of the primary rRNA binding proteins, it binds directly to 16S rRNA central domain where it helps coordinate assembly of the platform of the 30S subunit.</text>
</comment>
<comment type="subunit">
    <text evidence="1">Part of the 30S ribosomal subunit. Contacts proteins S5 and S12.</text>
</comment>
<comment type="similarity">
    <text evidence="1">Belongs to the universal ribosomal protein uS8 family.</text>
</comment>
<proteinExistence type="inferred from homology"/>
<dbReference type="EMBL" id="CU179680">
    <property type="protein sequence ID" value="CAL59231.1"/>
    <property type="molecule type" value="Genomic_DNA"/>
</dbReference>
<dbReference type="RefSeq" id="WP_011949696.1">
    <property type="nucleotide sequence ID" value="NC_009497.1"/>
</dbReference>
<dbReference type="SMR" id="A5IYX2"/>
<dbReference type="STRING" id="347257.MAG5330"/>
<dbReference type="GeneID" id="93358276"/>
<dbReference type="KEGG" id="maa:MAG5330"/>
<dbReference type="HOGENOM" id="CLU_098428_0_2_14"/>
<dbReference type="Proteomes" id="UP000007065">
    <property type="component" value="Chromosome"/>
</dbReference>
<dbReference type="GO" id="GO:1990904">
    <property type="term" value="C:ribonucleoprotein complex"/>
    <property type="evidence" value="ECO:0007669"/>
    <property type="project" value="UniProtKB-KW"/>
</dbReference>
<dbReference type="GO" id="GO:0005840">
    <property type="term" value="C:ribosome"/>
    <property type="evidence" value="ECO:0007669"/>
    <property type="project" value="UniProtKB-KW"/>
</dbReference>
<dbReference type="GO" id="GO:0019843">
    <property type="term" value="F:rRNA binding"/>
    <property type="evidence" value="ECO:0007669"/>
    <property type="project" value="UniProtKB-UniRule"/>
</dbReference>
<dbReference type="GO" id="GO:0003735">
    <property type="term" value="F:structural constituent of ribosome"/>
    <property type="evidence" value="ECO:0007669"/>
    <property type="project" value="InterPro"/>
</dbReference>
<dbReference type="GO" id="GO:0006412">
    <property type="term" value="P:translation"/>
    <property type="evidence" value="ECO:0007669"/>
    <property type="project" value="UniProtKB-UniRule"/>
</dbReference>
<dbReference type="FunFam" id="3.30.1370.30:FF:000002">
    <property type="entry name" value="30S ribosomal protein S8"/>
    <property type="match status" value="1"/>
</dbReference>
<dbReference type="FunFam" id="3.30.1490.10:FF:000001">
    <property type="entry name" value="30S ribosomal protein S8"/>
    <property type="match status" value="1"/>
</dbReference>
<dbReference type="Gene3D" id="3.30.1370.30">
    <property type="match status" value="1"/>
</dbReference>
<dbReference type="Gene3D" id="3.30.1490.10">
    <property type="match status" value="1"/>
</dbReference>
<dbReference type="HAMAP" id="MF_01302_B">
    <property type="entry name" value="Ribosomal_uS8_B"/>
    <property type="match status" value="1"/>
</dbReference>
<dbReference type="InterPro" id="IPR000630">
    <property type="entry name" value="Ribosomal_uS8"/>
</dbReference>
<dbReference type="InterPro" id="IPR047863">
    <property type="entry name" value="Ribosomal_uS8_CS"/>
</dbReference>
<dbReference type="InterPro" id="IPR035987">
    <property type="entry name" value="Ribosomal_uS8_sf"/>
</dbReference>
<dbReference type="NCBIfam" id="NF001109">
    <property type="entry name" value="PRK00136.1"/>
    <property type="match status" value="1"/>
</dbReference>
<dbReference type="PANTHER" id="PTHR11758">
    <property type="entry name" value="40S RIBOSOMAL PROTEIN S15A"/>
    <property type="match status" value="1"/>
</dbReference>
<dbReference type="Pfam" id="PF00410">
    <property type="entry name" value="Ribosomal_S8"/>
    <property type="match status" value="1"/>
</dbReference>
<dbReference type="SUPFAM" id="SSF56047">
    <property type="entry name" value="Ribosomal protein S8"/>
    <property type="match status" value="1"/>
</dbReference>
<dbReference type="PROSITE" id="PS00053">
    <property type="entry name" value="RIBOSOMAL_S8"/>
    <property type="match status" value="1"/>
</dbReference>
<keyword id="KW-1185">Reference proteome</keyword>
<keyword id="KW-0687">Ribonucleoprotein</keyword>
<keyword id="KW-0689">Ribosomal protein</keyword>
<keyword id="KW-0694">RNA-binding</keyword>
<keyword id="KW-0699">rRNA-binding</keyword>